<name>RS26_CRICR</name>
<feature type="chain" id="PRO_0000204508" description="Small ribosomal subunit protein eS26">
    <location>
        <begin position="1"/>
        <end position="115"/>
    </location>
</feature>
<feature type="region of interest" description="Disordered" evidence="3">
    <location>
        <begin position="85"/>
        <end position="115"/>
    </location>
</feature>
<feature type="compositionally biased region" description="Basic and acidic residues" evidence="3">
    <location>
        <begin position="87"/>
        <end position="97"/>
    </location>
</feature>
<feature type="modified residue" description="Phosphoserine" evidence="2">
    <location>
        <position position="54"/>
    </location>
</feature>
<gene>
    <name type="primary">RPS26</name>
</gene>
<comment type="function">
    <text evidence="2">Component of the small ribosomal subunit. The ribosome is a large ribonucleoprotein complex responsible for the synthesis of proteins in the cell.</text>
</comment>
<comment type="subunit">
    <text evidence="1">Component of the 40S small ribosomal subunit.</text>
</comment>
<comment type="subcellular location">
    <subcellularLocation>
        <location evidence="2">Cytoplasm</location>
        <location evidence="2">Cytosol</location>
    </subcellularLocation>
    <subcellularLocation>
        <location evidence="2">Cytoplasm</location>
    </subcellularLocation>
    <subcellularLocation>
        <location evidence="1">Rough endoplasmic reticulum</location>
    </subcellularLocation>
    <text evidence="1 2">Detected on cytosolic polysomes (By similarity). Detected in ribosomes that are associated with the rough endoplasmic reticulum (By similarity).</text>
</comment>
<comment type="similarity">
    <text evidence="4">Belongs to the eukaryotic ribosomal protein eS26 family.</text>
</comment>
<proteinExistence type="inferred from homology"/>
<evidence type="ECO:0000250" key="1">
    <source>
        <dbReference type="UniProtKB" id="P49171"/>
    </source>
</evidence>
<evidence type="ECO:0000250" key="2">
    <source>
        <dbReference type="UniProtKB" id="P62854"/>
    </source>
</evidence>
<evidence type="ECO:0000256" key="3">
    <source>
        <dbReference type="SAM" id="MobiDB-lite"/>
    </source>
</evidence>
<evidence type="ECO:0000305" key="4"/>
<organism>
    <name type="scientific">Cricetus cricetus</name>
    <name type="common">Black-bellied hamster</name>
    <dbReference type="NCBI Taxonomy" id="10034"/>
    <lineage>
        <taxon>Eukaryota</taxon>
        <taxon>Metazoa</taxon>
        <taxon>Chordata</taxon>
        <taxon>Craniata</taxon>
        <taxon>Vertebrata</taxon>
        <taxon>Euteleostomi</taxon>
        <taxon>Mammalia</taxon>
        <taxon>Eutheria</taxon>
        <taxon>Euarchontoglires</taxon>
        <taxon>Glires</taxon>
        <taxon>Rodentia</taxon>
        <taxon>Myomorpha</taxon>
        <taxon>Muroidea</taxon>
        <taxon>Cricetidae</taxon>
        <taxon>Cricetinae</taxon>
        <taxon>Cricetus</taxon>
    </lineage>
</organism>
<protein>
    <recommendedName>
        <fullName evidence="4">Small ribosomal subunit protein eS26</fullName>
    </recommendedName>
    <alternativeName>
        <fullName>40S ribosomal protein S26</fullName>
    </alternativeName>
</protein>
<accession>P30742</accession>
<reference key="1">
    <citation type="journal article" date="1993" name="Nucleic Acids Res.">
        <title>S26 ribosomal protein RNA: an invariant control for gene regulation experiments in eucaryotic cells and tissues.</title>
        <authorList>
            <person name="Vincent S."/>
            <person name="Marty L."/>
            <person name="Fort P."/>
        </authorList>
    </citation>
    <scope>NUCLEOTIDE SEQUENCE [MRNA]</scope>
    <source>
        <tissue>Lung</tissue>
    </source>
</reference>
<sequence>MTKKRRNNGRAKKGRGHVQPIRCTNCARCVPKDKAIKKFVIRNIVEAAAVRDISEASVFDAYVLPKLYVELHYCVSCAIHSKVVRNRSREARKDRTPPPRFRPAGAAPRPPPKPM</sequence>
<keyword id="KW-0963">Cytoplasm</keyword>
<keyword id="KW-0256">Endoplasmic reticulum</keyword>
<keyword id="KW-0597">Phosphoprotein</keyword>
<keyword id="KW-0687">Ribonucleoprotein</keyword>
<keyword id="KW-0689">Ribosomal protein</keyword>
<dbReference type="EMBL" id="X63389">
    <property type="protein sequence ID" value="CAA44996.1"/>
    <property type="molecule type" value="mRNA"/>
</dbReference>
<dbReference type="PIR" id="S30300">
    <property type="entry name" value="S18876"/>
</dbReference>
<dbReference type="SMR" id="P30742"/>
<dbReference type="GO" id="GO:0098556">
    <property type="term" value="C:cytoplasmic side of rough endoplasmic reticulum membrane"/>
    <property type="evidence" value="ECO:0000250"/>
    <property type="project" value="UniProtKB"/>
</dbReference>
<dbReference type="GO" id="GO:0022627">
    <property type="term" value="C:cytosolic small ribosomal subunit"/>
    <property type="evidence" value="ECO:0000250"/>
    <property type="project" value="UniProtKB"/>
</dbReference>
<dbReference type="GO" id="GO:0005840">
    <property type="term" value="C:ribosome"/>
    <property type="evidence" value="ECO:0000250"/>
    <property type="project" value="UniProtKB"/>
</dbReference>
<dbReference type="GO" id="GO:0003729">
    <property type="term" value="F:mRNA binding"/>
    <property type="evidence" value="ECO:0007669"/>
    <property type="project" value="TreeGrafter"/>
</dbReference>
<dbReference type="GO" id="GO:0003735">
    <property type="term" value="F:structural constituent of ribosome"/>
    <property type="evidence" value="ECO:0007669"/>
    <property type="project" value="InterPro"/>
</dbReference>
<dbReference type="GO" id="GO:0002181">
    <property type="term" value="P:cytoplasmic translation"/>
    <property type="evidence" value="ECO:0000250"/>
    <property type="project" value="UniProtKB"/>
</dbReference>
<dbReference type="FunFam" id="3.30.1740.20:FF:000001">
    <property type="entry name" value="40S ribosomal protein S26"/>
    <property type="match status" value="1"/>
</dbReference>
<dbReference type="Gene3D" id="3.30.1740.20">
    <property type="entry name" value="Ribosomal protein S26e"/>
    <property type="match status" value="1"/>
</dbReference>
<dbReference type="InterPro" id="IPR000892">
    <property type="entry name" value="Ribosomal_eS26"/>
</dbReference>
<dbReference type="InterPro" id="IPR047864">
    <property type="entry name" value="Ribosomal_eS26_CS"/>
</dbReference>
<dbReference type="InterPro" id="IPR038551">
    <property type="entry name" value="Ribosomal_eS26_sf"/>
</dbReference>
<dbReference type="PANTHER" id="PTHR12538">
    <property type="entry name" value="40S RIBOSOMAL PROTEIN S26"/>
    <property type="match status" value="1"/>
</dbReference>
<dbReference type="PANTHER" id="PTHR12538:SF7">
    <property type="entry name" value="SMALL RIBOSOMAL SUBUNIT PROTEIN ES26-RELATED"/>
    <property type="match status" value="1"/>
</dbReference>
<dbReference type="Pfam" id="PF01283">
    <property type="entry name" value="Ribosomal_S26e"/>
    <property type="match status" value="1"/>
</dbReference>
<dbReference type="PROSITE" id="PS00733">
    <property type="entry name" value="RIBOSOMAL_S26E"/>
    <property type="match status" value="1"/>
</dbReference>